<proteinExistence type="evidence at transcript level"/>
<reference key="1">
    <citation type="journal article" date="2005" name="Genome Res.">
        <title>Sequence, annotation, and analysis of synteny between rice chromosome 3 and diverged grass species.</title>
        <authorList>
            <consortium name="The rice chromosome 3 sequencing consortium"/>
            <person name="Buell C.R."/>
            <person name="Yuan Q."/>
            <person name="Ouyang S."/>
            <person name="Liu J."/>
            <person name="Zhu W."/>
            <person name="Wang A."/>
            <person name="Maiti R."/>
            <person name="Haas B."/>
            <person name="Wortman J."/>
            <person name="Pertea M."/>
            <person name="Jones K.M."/>
            <person name="Kim M."/>
            <person name="Overton L."/>
            <person name="Tsitrin T."/>
            <person name="Fadrosh D."/>
            <person name="Bera J."/>
            <person name="Weaver B."/>
            <person name="Jin S."/>
            <person name="Johri S."/>
            <person name="Reardon M."/>
            <person name="Webb K."/>
            <person name="Hill J."/>
            <person name="Moffat K."/>
            <person name="Tallon L."/>
            <person name="Van Aken S."/>
            <person name="Lewis M."/>
            <person name="Utterback T."/>
            <person name="Feldblyum T."/>
            <person name="Zismann V."/>
            <person name="Iobst S."/>
            <person name="Hsiao J."/>
            <person name="de Vazeille A.R."/>
            <person name="Salzberg S.L."/>
            <person name="White O."/>
            <person name="Fraser C.M."/>
            <person name="Yu Y."/>
            <person name="Kim H."/>
            <person name="Rambo T."/>
            <person name="Currie J."/>
            <person name="Collura K."/>
            <person name="Kernodle-Thompson S."/>
            <person name="Wei F."/>
            <person name="Kudrna K."/>
            <person name="Ammiraju J.S.S."/>
            <person name="Luo M."/>
            <person name="Goicoechea J.L."/>
            <person name="Wing R.A."/>
            <person name="Henry D."/>
            <person name="Oates R."/>
            <person name="Palmer M."/>
            <person name="Pries G."/>
            <person name="Saski C."/>
            <person name="Simmons J."/>
            <person name="Soderlund C."/>
            <person name="Nelson W."/>
            <person name="de la Bastide M."/>
            <person name="Spiegel L."/>
            <person name="Nascimento L."/>
            <person name="Huang E."/>
            <person name="Preston R."/>
            <person name="Zutavern T."/>
            <person name="Palmer L."/>
            <person name="O'Shaughnessy A."/>
            <person name="Dike S."/>
            <person name="McCombie W.R."/>
            <person name="Minx P."/>
            <person name="Cordum H."/>
            <person name="Wilson R."/>
            <person name="Jin W."/>
            <person name="Lee H.R."/>
            <person name="Jiang J."/>
            <person name="Jackson S."/>
        </authorList>
    </citation>
    <scope>NUCLEOTIDE SEQUENCE [LARGE SCALE GENOMIC DNA]</scope>
    <source>
        <strain>cv. Nipponbare</strain>
    </source>
</reference>
<reference key="2">
    <citation type="journal article" date="2005" name="Nature">
        <title>The map-based sequence of the rice genome.</title>
        <authorList>
            <consortium name="International rice genome sequencing project (IRGSP)"/>
        </authorList>
    </citation>
    <scope>NUCLEOTIDE SEQUENCE [LARGE SCALE GENOMIC DNA]</scope>
    <source>
        <strain>cv. Nipponbare</strain>
    </source>
</reference>
<reference key="3">
    <citation type="journal article" date="2013" name="Rice">
        <title>Improvement of the Oryza sativa Nipponbare reference genome using next generation sequence and optical map data.</title>
        <authorList>
            <person name="Kawahara Y."/>
            <person name="de la Bastide M."/>
            <person name="Hamilton J.P."/>
            <person name="Kanamori H."/>
            <person name="McCombie W.R."/>
            <person name="Ouyang S."/>
            <person name="Schwartz D.C."/>
            <person name="Tanaka T."/>
            <person name="Wu J."/>
            <person name="Zhou S."/>
            <person name="Childs K.L."/>
            <person name="Davidson R.M."/>
            <person name="Lin H."/>
            <person name="Quesada-Ocampo L."/>
            <person name="Vaillancourt B."/>
            <person name="Sakai H."/>
            <person name="Lee S.S."/>
            <person name="Kim J."/>
            <person name="Numa H."/>
            <person name="Itoh T."/>
            <person name="Buell C.R."/>
            <person name="Matsumoto T."/>
        </authorList>
    </citation>
    <scope>GENOME REANNOTATION</scope>
    <source>
        <strain>cv. Nipponbare</strain>
    </source>
</reference>
<reference key="4">
    <citation type="journal article" date="2003" name="Science">
        <title>Collection, mapping, and annotation of over 28,000 cDNA clones from japonica rice.</title>
        <authorList>
            <consortium name="The rice full-length cDNA consortium"/>
        </authorList>
    </citation>
    <scope>NUCLEOTIDE SEQUENCE [LARGE SCALE MRNA]</scope>
    <source>
        <strain>cv. Nipponbare</strain>
    </source>
</reference>
<comment type="function">
    <text evidence="1">The probable reversibility of the MTHFR reaction in plants suggests that they can metabolize the methyl group of 5,10-methylenetetrahydrofolate to serine, sugars and starch.</text>
</comment>
<comment type="catalytic activity">
    <reaction>
        <text>(6S)-5-methyl-5,6,7,8-tetrahydrofolate + NAD(+) = (6R)-5,10-methylene-5,6,7,8-tetrahydrofolate + NADH + H(+)</text>
        <dbReference type="Rhea" id="RHEA:19821"/>
        <dbReference type="ChEBI" id="CHEBI:15378"/>
        <dbReference type="ChEBI" id="CHEBI:15636"/>
        <dbReference type="ChEBI" id="CHEBI:18608"/>
        <dbReference type="ChEBI" id="CHEBI:57540"/>
        <dbReference type="ChEBI" id="CHEBI:57945"/>
        <dbReference type="EC" id="1.5.1.54"/>
    </reaction>
</comment>
<comment type="cofactor">
    <cofactor evidence="1">
        <name>FAD</name>
        <dbReference type="ChEBI" id="CHEBI:57692"/>
    </cofactor>
</comment>
<comment type="activity regulation">
    <text evidence="1">Plant MTHFRs strongly prefer NADH over NADPH. Not inhibited by methionine or S-adenosylmethionine (By similarity).</text>
</comment>
<comment type="pathway">
    <text>One-carbon metabolism; tetrahydrofolate interconversion.</text>
</comment>
<comment type="subunit">
    <text evidence="1">Homodimer.</text>
</comment>
<comment type="similarity">
    <text evidence="2">Belongs to the methylenetetrahydrofolate reductase family.</text>
</comment>
<comment type="sequence caution" evidence="2">
    <conflict type="frameshift">
        <sequence resource="EMBL" id="AK121351"/>
    </conflict>
</comment>
<protein>
    <recommendedName>
        <fullName>Probable methylenetetrahydrofolate reductase (NADH)</fullName>
        <ecNumber>1.5.1.54</ecNumber>
    </recommendedName>
</protein>
<name>MTHR_ORYSJ</name>
<accession>Q75HE6</accession>
<accession>Q75GR7</accession>
<feature type="chain" id="PRO_0000190252" description="Probable methylenetetrahydrofolate reductase (NADH)">
    <location>
        <begin position="1"/>
        <end position="594"/>
    </location>
</feature>
<feature type="active site" description="Proton donor/acceptor" evidence="1">
    <location>
        <position position="21"/>
    </location>
</feature>
<feature type="binding site" evidence="1">
    <location>
        <begin position="21"/>
        <end position="26"/>
    </location>
    <ligand>
        <name>NAD(+)</name>
        <dbReference type="ChEBI" id="CHEBI:57540"/>
    </ligand>
</feature>
<feature type="binding site" evidence="1">
    <location>
        <begin position="52"/>
        <end position="53"/>
    </location>
    <ligand>
        <name>FAD</name>
        <dbReference type="ChEBI" id="CHEBI:57692"/>
    </ligand>
</feature>
<feature type="binding site" evidence="1">
    <location>
        <begin position="52"/>
        <end position="53"/>
    </location>
    <ligand>
        <name>NAD(+)</name>
        <dbReference type="ChEBI" id="CHEBI:57540"/>
    </ligand>
</feature>
<feature type="binding site" evidence="1">
    <location>
        <position position="81"/>
    </location>
    <ligand>
        <name>FAD</name>
        <dbReference type="ChEBI" id="CHEBI:57692"/>
    </ligand>
</feature>
<feature type="binding site" evidence="1">
    <location>
        <begin position="111"/>
        <end position="113"/>
    </location>
    <ligand>
        <name>FAD</name>
        <dbReference type="ChEBI" id="CHEBI:57692"/>
    </ligand>
</feature>
<feature type="binding site" evidence="1">
    <location>
        <position position="113"/>
    </location>
    <ligand>
        <name>substrate</name>
    </ligand>
</feature>
<feature type="binding site" evidence="1">
    <location>
        <position position="153"/>
    </location>
    <ligand>
        <name>FAD</name>
        <dbReference type="ChEBI" id="CHEBI:57692"/>
    </ligand>
</feature>
<feature type="binding site" evidence="1">
    <location>
        <begin position="157"/>
        <end position="160"/>
    </location>
    <ligand>
        <name>FAD</name>
        <dbReference type="ChEBI" id="CHEBI:57692"/>
    </ligand>
</feature>
<feature type="binding site" evidence="1">
    <location>
        <position position="175"/>
    </location>
    <ligand>
        <name>FAD</name>
        <dbReference type="ChEBI" id="CHEBI:57692"/>
    </ligand>
</feature>
<feature type="binding site" evidence="1">
    <location>
        <position position="182"/>
    </location>
    <ligand>
        <name>FAD</name>
        <dbReference type="ChEBI" id="CHEBI:57692"/>
    </ligand>
</feature>
<feature type="binding site" evidence="1">
    <location>
        <position position="193"/>
    </location>
    <ligand>
        <name>substrate</name>
    </ligand>
</feature>
<feature type="binding site" evidence="1">
    <location>
        <position position="285"/>
    </location>
    <ligand>
        <name>substrate</name>
    </ligand>
</feature>
<feature type="sequence conflict" description="In Ref. 4; AK121351." evidence="2" ref="4">
    <original>E</original>
    <variation>G</variation>
    <location>
        <position position="5"/>
    </location>
</feature>
<feature type="sequence conflict" description="In Ref. 4; AK099527." evidence="2" ref="4">
    <original>G</original>
    <variation>R</variation>
    <location>
        <position position="404"/>
    </location>
</feature>
<keyword id="KW-0274">FAD</keyword>
<keyword id="KW-0285">Flavoprotein</keyword>
<keyword id="KW-0520">NAD</keyword>
<keyword id="KW-0560">Oxidoreductase</keyword>
<keyword id="KW-1185">Reference proteome</keyword>
<organism>
    <name type="scientific">Oryza sativa subsp. japonica</name>
    <name type="common">Rice</name>
    <dbReference type="NCBI Taxonomy" id="39947"/>
    <lineage>
        <taxon>Eukaryota</taxon>
        <taxon>Viridiplantae</taxon>
        <taxon>Streptophyta</taxon>
        <taxon>Embryophyta</taxon>
        <taxon>Tracheophyta</taxon>
        <taxon>Spermatophyta</taxon>
        <taxon>Magnoliopsida</taxon>
        <taxon>Liliopsida</taxon>
        <taxon>Poales</taxon>
        <taxon>Poaceae</taxon>
        <taxon>BOP clade</taxon>
        <taxon>Oryzoideae</taxon>
        <taxon>Oryzeae</taxon>
        <taxon>Oryzinae</taxon>
        <taxon>Oryza</taxon>
        <taxon>Oryza sativa</taxon>
    </lineage>
</organism>
<evidence type="ECO:0000250" key="1"/>
<evidence type="ECO:0000305" key="2"/>
<sequence>MKVIEKIQEAAADGRTVFSFEYFPPKTEEGLDNLFERMDRMVAHGPNFCDITWGAGGSTADLTLEIANRMQNMVCVETMMHLTCTNMPVEKIDDALTTIKSNGIQNVLALRGDPPHGQDKFVQVAGGFACALDLVQHIRAKYGDYFGITVAGYPEAHPDAIQSTEGATPEAYSNDLAYLKQKVDAGADLIITQLFYDTDIFLKFVNDCRQIGITCPIVPGIMPINNYKGFLRMTGFCKTKIPAEITAALEPIKDNEEAVKAYGIHLGTEMCKKILATGIKTLHLYTLNMEKSALGILMNLGLIEESKISRSLPWRPPTNVFRVKEDVRPIFWANRPKSYISRTLGWDQYPHGRWGDSRNPSYGALTDYQFTRPRGRGKKLQEEWAVPVKSVEDINERFMNFCQGKLTSSPWSELDGLQPETKIIDDQLVKINQKGFLTINSQPAVNGERSDSTSVGWGGPGGYVYQKAYLEFFCSKEKLDQLIEKSKAFPSLTYIAVNKDGESFSNIPTNAVNAVTWGVFPGKEIVQPTVVDSASFMVWKDEAFEIWSKGWACLFPEGDSSREILDKVQKSYFLVSLVDNDYINGDLFAAFKEI</sequence>
<dbReference type="EC" id="1.5.1.54"/>
<dbReference type="EMBL" id="AC135594">
    <property type="protein sequence ID" value="AAR89836.1"/>
    <property type="molecule type" value="Genomic_DNA"/>
</dbReference>
<dbReference type="EMBL" id="AC139172">
    <property type="protein sequence ID" value="AAR01748.1"/>
    <property type="molecule type" value="Genomic_DNA"/>
</dbReference>
<dbReference type="EMBL" id="AP014959">
    <property type="protein sequence ID" value="BAS87029.1"/>
    <property type="molecule type" value="Genomic_DNA"/>
</dbReference>
<dbReference type="EMBL" id="AK062082">
    <property type="status" value="NOT_ANNOTATED_CDS"/>
    <property type="molecule type" value="mRNA"/>
</dbReference>
<dbReference type="EMBL" id="AK099527">
    <property type="status" value="NOT_ANNOTATED_CDS"/>
    <property type="molecule type" value="mRNA"/>
</dbReference>
<dbReference type="EMBL" id="AK121351">
    <property type="status" value="NOT_ANNOTATED_CDS"/>
    <property type="molecule type" value="mRNA"/>
</dbReference>
<dbReference type="RefSeq" id="XP_015630556.1">
    <property type="nucleotide sequence ID" value="XM_015775070.1"/>
</dbReference>
<dbReference type="SMR" id="Q75HE6"/>
<dbReference type="FunCoup" id="Q75HE6">
    <property type="interactions" value="2237"/>
</dbReference>
<dbReference type="STRING" id="39947.Q75HE6"/>
<dbReference type="PaxDb" id="39947-Q75HE6"/>
<dbReference type="EnsemblPlants" id="Os03t0815200-01">
    <property type="protein sequence ID" value="Os03t0815200-01"/>
    <property type="gene ID" value="Os03g0815200"/>
</dbReference>
<dbReference type="Gramene" id="Os03t0815200-01">
    <property type="protein sequence ID" value="Os03t0815200-01"/>
    <property type="gene ID" value="Os03g0815200"/>
</dbReference>
<dbReference type="eggNOG" id="KOG0564">
    <property type="taxonomic scope" value="Eukaryota"/>
</dbReference>
<dbReference type="HOGENOM" id="CLU_025841_2_2_1"/>
<dbReference type="InParanoid" id="Q75HE6"/>
<dbReference type="OMA" id="AWKEEFY"/>
<dbReference type="OrthoDB" id="16284at2759"/>
<dbReference type="UniPathway" id="UPA00193"/>
<dbReference type="Proteomes" id="UP000000763">
    <property type="component" value="Chromosome 3"/>
</dbReference>
<dbReference type="Proteomes" id="UP000059680">
    <property type="component" value="Chromosome 3"/>
</dbReference>
<dbReference type="ExpressionAtlas" id="Q75HE6">
    <property type="expression patterns" value="baseline and differential"/>
</dbReference>
<dbReference type="GO" id="GO:0071949">
    <property type="term" value="F:FAD binding"/>
    <property type="evidence" value="ECO:0000318"/>
    <property type="project" value="GO_Central"/>
</dbReference>
<dbReference type="GO" id="GO:0004489">
    <property type="term" value="F:methylenetetrahydrofolate reductase (NAD(P)H) activity"/>
    <property type="evidence" value="ECO:0000318"/>
    <property type="project" value="GO_Central"/>
</dbReference>
<dbReference type="GO" id="GO:0106312">
    <property type="term" value="F:methylenetetrahydrofolate reductase (NADH) activity"/>
    <property type="evidence" value="ECO:0007669"/>
    <property type="project" value="RHEA"/>
</dbReference>
<dbReference type="GO" id="GO:0009086">
    <property type="term" value="P:methionine biosynthetic process"/>
    <property type="evidence" value="ECO:0000318"/>
    <property type="project" value="GO_Central"/>
</dbReference>
<dbReference type="GO" id="GO:0035999">
    <property type="term" value="P:tetrahydrofolate interconversion"/>
    <property type="evidence" value="ECO:0000318"/>
    <property type="project" value="GO_Central"/>
</dbReference>
<dbReference type="CDD" id="cd00537">
    <property type="entry name" value="MTHFR"/>
    <property type="match status" value="1"/>
</dbReference>
<dbReference type="FunFam" id="3.20.20.220:FF:000005">
    <property type="entry name" value="Methylenetetrahydrofolate reductase"/>
    <property type="match status" value="1"/>
</dbReference>
<dbReference type="Gene3D" id="3.20.20.220">
    <property type="match status" value="1"/>
</dbReference>
<dbReference type="InterPro" id="IPR029041">
    <property type="entry name" value="FAD-linked_oxidoreductase-like"/>
</dbReference>
<dbReference type="InterPro" id="IPR004621">
    <property type="entry name" value="Fadh2_euk"/>
</dbReference>
<dbReference type="InterPro" id="IPR003171">
    <property type="entry name" value="Mehydrof_redctse-like"/>
</dbReference>
<dbReference type="InterPro" id="IPR053806">
    <property type="entry name" value="MTHFR_C"/>
</dbReference>
<dbReference type="NCBIfam" id="TIGR00677">
    <property type="entry name" value="fadh2_euk"/>
    <property type="match status" value="1"/>
</dbReference>
<dbReference type="PANTHER" id="PTHR45754">
    <property type="entry name" value="METHYLENETETRAHYDROFOLATE REDUCTASE"/>
    <property type="match status" value="1"/>
</dbReference>
<dbReference type="PANTHER" id="PTHR45754:SF3">
    <property type="entry name" value="METHYLENETETRAHYDROFOLATE REDUCTASE (NADPH)"/>
    <property type="match status" value="1"/>
</dbReference>
<dbReference type="Pfam" id="PF02219">
    <property type="entry name" value="MTHFR"/>
    <property type="match status" value="1"/>
</dbReference>
<dbReference type="Pfam" id="PF21895">
    <property type="entry name" value="MTHFR_C"/>
    <property type="match status" value="1"/>
</dbReference>
<dbReference type="SUPFAM" id="SSF51730">
    <property type="entry name" value="FAD-linked oxidoreductase"/>
    <property type="match status" value="1"/>
</dbReference>
<gene>
    <name type="ordered locus">Os03g0815200</name>
    <name type="ordered locus">LOC_Os03g60090</name>
    <name type="ORF">OSJNBa0024F18.2</name>
    <name type="ORF">OSJNBb0042K11.1</name>
</gene>